<dbReference type="EC" id="2.3.1.286" evidence="2 10 15 23 24 25 26"/>
<dbReference type="EC" id="2.3.1.-" evidence="1"/>
<dbReference type="EMBL" id="AF299339">
    <property type="protein sequence ID" value="AAG39258.1"/>
    <property type="molecule type" value="mRNA"/>
</dbReference>
<dbReference type="EMBL" id="FJ621493">
    <property type="protein sequence ID" value="ACM68947.1"/>
    <property type="molecule type" value="mRNA"/>
</dbReference>
<dbReference type="EMBL" id="EU886466">
    <property type="protein sequence ID" value="ACJ70655.1"/>
    <property type="molecule type" value="mRNA"/>
</dbReference>
<dbReference type="EMBL" id="AF302278">
    <property type="protein sequence ID" value="AAG33227.1"/>
    <property type="molecule type" value="Genomic_DNA"/>
</dbReference>
<dbReference type="EMBL" id="AF302274">
    <property type="protein sequence ID" value="AAG33227.1"/>
    <property type="status" value="JOINED"/>
    <property type="molecule type" value="Genomic_DNA"/>
</dbReference>
<dbReference type="EMBL" id="AF302275">
    <property type="protein sequence ID" value="AAG33227.1"/>
    <property type="status" value="JOINED"/>
    <property type="molecule type" value="Genomic_DNA"/>
</dbReference>
<dbReference type="EMBL" id="AF302276">
    <property type="protein sequence ID" value="AAG33227.1"/>
    <property type="status" value="JOINED"/>
    <property type="molecule type" value="Genomic_DNA"/>
</dbReference>
<dbReference type="EMBL" id="AF302277">
    <property type="protein sequence ID" value="AAG33227.1"/>
    <property type="status" value="JOINED"/>
    <property type="molecule type" value="Genomic_DNA"/>
</dbReference>
<dbReference type="EMBL" id="AF299338">
    <property type="protein sequence ID" value="AAG39257.1"/>
    <property type="molecule type" value="mRNA"/>
</dbReference>
<dbReference type="EMBL" id="AK075861">
    <property type="protein sequence ID" value="BAC36012.1"/>
    <property type="molecule type" value="mRNA"/>
</dbReference>
<dbReference type="EMBL" id="BC025878">
    <property type="protein sequence ID" value="AAH25878.1"/>
    <property type="molecule type" value="mRNA"/>
</dbReference>
<dbReference type="CCDS" id="CCDS21989.1">
    <molecule id="Q8R104-2"/>
</dbReference>
<dbReference type="RefSeq" id="NP_001120823.1">
    <molecule id="Q8R104-2"/>
    <property type="nucleotide sequence ID" value="NM_001127351.1"/>
</dbReference>
<dbReference type="RefSeq" id="NP_001171275.1">
    <molecule id="Q8R104-1"/>
    <property type="nucleotide sequence ID" value="NM_001177804.1"/>
</dbReference>
<dbReference type="RefSeq" id="NP_071878.2">
    <molecule id="Q8R104-2"/>
    <property type="nucleotide sequence ID" value="NM_022433.2"/>
</dbReference>
<dbReference type="SMR" id="Q8R104"/>
<dbReference type="BioGRID" id="211071">
    <property type="interactions" value="15"/>
</dbReference>
<dbReference type="FunCoup" id="Q8R104">
    <property type="interactions" value="401"/>
</dbReference>
<dbReference type="IntAct" id="Q8R104">
    <property type="interactions" value="3"/>
</dbReference>
<dbReference type="MINT" id="Q8R104"/>
<dbReference type="STRING" id="10090.ENSMUSP00000026559"/>
<dbReference type="ChEMBL" id="CHEMBL5169177"/>
<dbReference type="GlyGen" id="Q8R104">
    <property type="glycosylation" value="1 site, 1 N-linked glycan (1 site)"/>
</dbReference>
<dbReference type="iPTMnet" id="Q8R104"/>
<dbReference type="PhosphoSitePlus" id="Q8R104"/>
<dbReference type="SwissPalm" id="Q8R104"/>
<dbReference type="PaxDb" id="10090-ENSMUSP00000026559"/>
<dbReference type="PeptideAtlas" id="Q8R104"/>
<dbReference type="ProteomicsDB" id="257018">
    <molecule id="Q8R104-1"/>
</dbReference>
<dbReference type="ProteomicsDB" id="257019">
    <molecule id="Q8R104-2"/>
</dbReference>
<dbReference type="Antibodypedia" id="9472">
    <property type="antibodies" value="772 antibodies from 46 providers"/>
</dbReference>
<dbReference type="DNASU" id="64384"/>
<dbReference type="Ensembl" id="ENSMUST00000026559.14">
    <molecule id="Q8R104-2"/>
    <property type="protein sequence ID" value="ENSMUSP00000026559.8"/>
    <property type="gene ID" value="ENSMUSG00000025486.18"/>
</dbReference>
<dbReference type="Ensembl" id="ENSMUST00000106048.10">
    <molecule id="Q8R104-2"/>
    <property type="protein sequence ID" value="ENSMUSP00000101663.4"/>
    <property type="gene ID" value="ENSMUSG00000025486.18"/>
</dbReference>
<dbReference type="GeneID" id="64384"/>
<dbReference type="KEGG" id="mmu:64384"/>
<dbReference type="UCSC" id="uc009kik.2">
    <molecule id="Q8R104-1"/>
    <property type="organism name" value="mouse"/>
</dbReference>
<dbReference type="AGR" id="MGI:1927665"/>
<dbReference type="CTD" id="23410"/>
<dbReference type="MGI" id="MGI:1927665">
    <property type="gene designation" value="Sirt3"/>
</dbReference>
<dbReference type="VEuPathDB" id="HostDB:ENSMUSG00000025486"/>
<dbReference type="eggNOG" id="KOG2682">
    <property type="taxonomic scope" value="Eukaryota"/>
</dbReference>
<dbReference type="GeneTree" id="ENSGT00940000159464"/>
<dbReference type="InParanoid" id="Q8R104"/>
<dbReference type="OMA" id="YCQVPDC"/>
<dbReference type="OrthoDB" id="69462at9989"/>
<dbReference type="TreeFam" id="TF106181"/>
<dbReference type="BRENDA" id="2.3.1.286">
    <property type="organism ID" value="3474"/>
</dbReference>
<dbReference type="Reactome" id="R-MMU-2151201">
    <property type="pathway name" value="Transcriptional activation of mitochondrial biogenesis"/>
</dbReference>
<dbReference type="Reactome" id="R-MMU-9617629">
    <property type="pathway name" value="Regulation of FOXO transcriptional activity by acetylation"/>
</dbReference>
<dbReference type="Reactome" id="R-MMU-9841251">
    <property type="pathway name" value="Mitochondrial unfolded protein response (UPRmt)"/>
</dbReference>
<dbReference type="Reactome" id="R-MMU-9854311">
    <property type="pathway name" value="Maturation of TCA enzymes and regulation of TCA cycle"/>
</dbReference>
<dbReference type="BioGRID-ORCS" id="64384">
    <property type="hits" value="3 hits in 80 CRISPR screens"/>
</dbReference>
<dbReference type="ChiTaRS" id="Sirt3">
    <property type="organism name" value="mouse"/>
</dbReference>
<dbReference type="PRO" id="PR:Q8R104"/>
<dbReference type="Proteomes" id="UP000000589">
    <property type="component" value="Chromosome 7"/>
</dbReference>
<dbReference type="RNAct" id="Q8R104">
    <property type="molecule type" value="protein"/>
</dbReference>
<dbReference type="Bgee" id="ENSMUSG00000025486">
    <property type="expression patterns" value="Expressed in proximal tubule and 267 other cell types or tissues"/>
</dbReference>
<dbReference type="ExpressionAtlas" id="Q8R104">
    <property type="expression patterns" value="baseline and differential"/>
</dbReference>
<dbReference type="GO" id="GO:0005737">
    <property type="term" value="C:cytoplasm"/>
    <property type="evidence" value="ECO:0000314"/>
    <property type="project" value="MGI"/>
</dbReference>
<dbReference type="GO" id="GO:0016020">
    <property type="term" value="C:membrane"/>
    <property type="evidence" value="ECO:0000314"/>
    <property type="project" value="MGI"/>
</dbReference>
<dbReference type="GO" id="GO:0005743">
    <property type="term" value="C:mitochondrial inner membrane"/>
    <property type="evidence" value="ECO:0000314"/>
    <property type="project" value="CACAO"/>
</dbReference>
<dbReference type="GO" id="GO:0005759">
    <property type="term" value="C:mitochondrial matrix"/>
    <property type="evidence" value="ECO:0000314"/>
    <property type="project" value="MGI"/>
</dbReference>
<dbReference type="GO" id="GO:0005739">
    <property type="term" value="C:mitochondrion"/>
    <property type="evidence" value="ECO:0000314"/>
    <property type="project" value="MGI"/>
</dbReference>
<dbReference type="GO" id="GO:0032991">
    <property type="term" value="C:protein-containing complex"/>
    <property type="evidence" value="ECO:0000314"/>
    <property type="project" value="UniProtKB"/>
</dbReference>
<dbReference type="GO" id="GO:0017136">
    <property type="term" value="F:histone deacetylase activity, NAD-dependent"/>
    <property type="evidence" value="ECO:0007669"/>
    <property type="project" value="InterPro"/>
</dbReference>
<dbReference type="GO" id="GO:0032041">
    <property type="term" value="F:histone H3K14 deacetylase activity, NAD-dependent"/>
    <property type="evidence" value="ECO:0000314"/>
    <property type="project" value="MGI"/>
</dbReference>
<dbReference type="GO" id="GO:0070403">
    <property type="term" value="F:NAD+ binding"/>
    <property type="evidence" value="ECO:0007669"/>
    <property type="project" value="InterPro"/>
</dbReference>
<dbReference type="GO" id="GO:0034979">
    <property type="term" value="F:NAD-dependent protein lysine deacetylase activity"/>
    <property type="evidence" value="ECO:0000314"/>
    <property type="project" value="UniProtKB"/>
</dbReference>
<dbReference type="GO" id="GO:0141208">
    <property type="term" value="F:NAD-dependent protein lysine delactylase activity"/>
    <property type="evidence" value="ECO:0000250"/>
    <property type="project" value="UniProtKB"/>
</dbReference>
<dbReference type="GO" id="GO:0043565">
    <property type="term" value="F:sequence-specific DNA binding"/>
    <property type="evidence" value="ECO:0000314"/>
    <property type="project" value="UniProtKB"/>
</dbReference>
<dbReference type="GO" id="GO:0008270">
    <property type="term" value="F:zinc ion binding"/>
    <property type="evidence" value="ECO:0000250"/>
    <property type="project" value="UniProtKB"/>
</dbReference>
<dbReference type="GO" id="GO:0009060">
    <property type="term" value="P:aerobic respiration"/>
    <property type="evidence" value="ECO:0000250"/>
    <property type="project" value="UniProtKB"/>
</dbReference>
<dbReference type="GO" id="GO:0034983">
    <property type="term" value="P:peptidyl-lysine deacetylation"/>
    <property type="evidence" value="ECO:0000314"/>
    <property type="project" value="UniProtKB"/>
</dbReference>
<dbReference type="GO" id="GO:2000304">
    <property type="term" value="P:positive regulation of ceramide biosynthetic process"/>
    <property type="evidence" value="ECO:0000314"/>
    <property type="project" value="UniProtKB"/>
</dbReference>
<dbReference type="GO" id="GO:1903109">
    <property type="term" value="P:positive regulation of mitochondrial transcription"/>
    <property type="evidence" value="ECO:0000315"/>
    <property type="project" value="UniProtKB"/>
</dbReference>
<dbReference type="GO" id="GO:1903862">
    <property type="term" value="P:positive regulation of oxidative phosphorylation"/>
    <property type="evidence" value="ECO:0007669"/>
    <property type="project" value="Ensembl"/>
</dbReference>
<dbReference type="GO" id="GO:0006476">
    <property type="term" value="P:protein deacetylation"/>
    <property type="evidence" value="ECO:0000250"/>
    <property type="project" value="UniProtKB"/>
</dbReference>
<dbReference type="CDD" id="cd01408">
    <property type="entry name" value="SIRT1"/>
    <property type="match status" value="1"/>
</dbReference>
<dbReference type="Gene3D" id="3.30.1600.10">
    <property type="entry name" value="SIR2/SIRT2 'Small Domain"/>
    <property type="match status" value="1"/>
</dbReference>
<dbReference type="Gene3D" id="3.40.50.1220">
    <property type="entry name" value="TPP-binding domain"/>
    <property type="match status" value="1"/>
</dbReference>
<dbReference type="InterPro" id="IPR029035">
    <property type="entry name" value="DHS-like_NAD/FAD-binding_dom"/>
</dbReference>
<dbReference type="InterPro" id="IPR050134">
    <property type="entry name" value="NAD-dep_sirtuin_deacylases"/>
</dbReference>
<dbReference type="InterPro" id="IPR003000">
    <property type="entry name" value="Sirtuin"/>
</dbReference>
<dbReference type="InterPro" id="IPR026591">
    <property type="entry name" value="Sirtuin_cat_small_dom_sf"/>
</dbReference>
<dbReference type="InterPro" id="IPR017328">
    <property type="entry name" value="Sirtuin_class_I"/>
</dbReference>
<dbReference type="InterPro" id="IPR026590">
    <property type="entry name" value="Ssirtuin_cat_dom"/>
</dbReference>
<dbReference type="PANTHER" id="PTHR11085:SF5">
    <property type="entry name" value="NAD-DEPENDENT PROTEIN DEACETYLASE SIRTUIN-3, MITOCHONDRIAL"/>
    <property type="match status" value="1"/>
</dbReference>
<dbReference type="PANTHER" id="PTHR11085">
    <property type="entry name" value="NAD-DEPENDENT PROTEIN DEACYLASE SIRTUIN-5, MITOCHONDRIAL-RELATED"/>
    <property type="match status" value="1"/>
</dbReference>
<dbReference type="Pfam" id="PF02146">
    <property type="entry name" value="SIR2"/>
    <property type="match status" value="1"/>
</dbReference>
<dbReference type="PIRSF" id="PIRSF037938">
    <property type="entry name" value="SIR2_euk"/>
    <property type="match status" value="1"/>
</dbReference>
<dbReference type="SUPFAM" id="SSF52467">
    <property type="entry name" value="DHS-like NAD/FAD-binding domain"/>
    <property type="match status" value="1"/>
</dbReference>
<dbReference type="PROSITE" id="PS50305">
    <property type="entry name" value="SIRTUIN"/>
    <property type="match status" value="1"/>
</dbReference>
<reference key="1">
    <citation type="journal article" date="2000" name="Genomics">
        <title>Cloning and characterization of two mouse genes with homology to the yeast sir2 gene.</title>
        <authorList>
            <person name="Yang Y.H."/>
            <person name="Chen Y.H."/>
            <person name="Zhang C.Y."/>
            <person name="Nimmakayalu M.A."/>
            <person name="Ward D.C."/>
            <person name="Weissman S."/>
        </authorList>
    </citation>
    <scope>NUCLEOTIDE SEQUENCE [GENOMIC DNA / MRNA] (ISOFORM S)</scope>
    <scope>SUBCELLULAR LOCATION</scope>
    <scope>TISSUE SPECIFICITY</scope>
    <source>
        <strain>129/Ola</strain>
    </source>
</reference>
<reference key="2">
    <citation type="journal article" date="2009" name="PLoS ONE">
        <title>A new splice variant of the mouse SIRT3 gene encodes the mitochondrial precursor protein.</title>
        <authorList>
            <person name="Cooper H.M."/>
            <person name="Huang J.Y."/>
            <person name="Verdin E."/>
            <person name="Spelbrink J.N."/>
        </authorList>
    </citation>
    <scope>NUCLEOTIDE SEQUENCE [MRNA] (ISOFORM L)</scope>
    <scope>SUBCELLULAR LOCATION</scope>
    <scope>ALTERNATIVE SPLICING</scope>
    <source>
        <strain>NIH Swiss</strain>
    </source>
</reference>
<reference key="3">
    <citation type="journal article" date="2009" name="Protein Sci.">
        <title>Biochemical characterization, localization, and tissue distribution of the longer form of mouse SIRT3.</title>
        <authorList>
            <person name="Jin L."/>
            <person name="Galonek H."/>
            <person name="Israelian K."/>
            <person name="Choy W."/>
            <person name="Morrison M."/>
            <person name="Xia Y."/>
            <person name="Wang X."/>
            <person name="Xu Y."/>
            <person name="Yang Y."/>
            <person name="Smith J.J."/>
            <person name="Hoffmann E."/>
            <person name="Carney D.P."/>
            <person name="Perni R.B."/>
            <person name="Jirousek M.R."/>
            <person name="Bemis J.E."/>
            <person name="Milne J.C."/>
            <person name="Sinclair D.A."/>
            <person name="Westphal C.H."/>
        </authorList>
    </citation>
    <scope>NUCLEOTIDE SEQUENCE [MRNA] (ISOFORM L)</scope>
    <scope>SUBCELLULAR LOCATION</scope>
    <scope>ALTERNATIVE SPLICING</scope>
    <source>
        <strain>ICR</strain>
        <tissue>Liver</tissue>
    </source>
</reference>
<reference key="4">
    <citation type="journal article" date="2005" name="Science">
        <title>The transcriptional landscape of the mammalian genome.</title>
        <authorList>
            <person name="Carninci P."/>
            <person name="Kasukawa T."/>
            <person name="Katayama S."/>
            <person name="Gough J."/>
            <person name="Frith M.C."/>
            <person name="Maeda N."/>
            <person name="Oyama R."/>
            <person name="Ravasi T."/>
            <person name="Lenhard B."/>
            <person name="Wells C."/>
            <person name="Kodzius R."/>
            <person name="Shimokawa K."/>
            <person name="Bajic V.B."/>
            <person name="Brenner S.E."/>
            <person name="Batalov S."/>
            <person name="Forrest A.R."/>
            <person name="Zavolan M."/>
            <person name="Davis M.J."/>
            <person name="Wilming L.G."/>
            <person name="Aidinis V."/>
            <person name="Allen J.E."/>
            <person name="Ambesi-Impiombato A."/>
            <person name="Apweiler R."/>
            <person name="Aturaliya R.N."/>
            <person name="Bailey T.L."/>
            <person name="Bansal M."/>
            <person name="Baxter L."/>
            <person name="Beisel K.W."/>
            <person name="Bersano T."/>
            <person name="Bono H."/>
            <person name="Chalk A.M."/>
            <person name="Chiu K.P."/>
            <person name="Choudhary V."/>
            <person name="Christoffels A."/>
            <person name="Clutterbuck D.R."/>
            <person name="Crowe M.L."/>
            <person name="Dalla E."/>
            <person name="Dalrymple B.P."/>
            <person name="de Bono B."/>
            <person name="Della Gatta G."/>
            <person name="di Bernardo D."/>
            <person name="Down T."/>
            <person name="Engstrom P."/>
            <person name="Fagiolini M."/>
            <person name="Faulkner G."/>
            <person name="Fletcher C.F."/>
            <person name="Fukushima T."/>
            <person name="Furuno M."/>
            <person name="Futaki S."/>
            <person name="Gariboldi M."/>
            <person name="Georgii-Hemming P."/>
            <person name="Gingeras T.R."/>
            <person name="Gojobori T."/>
            <person name="Green R.E."/>
            <person name="Gustincich S."/>
            <person name="Harbers M."/>
            <person name="Hayashi Y."/>
            <person name="Hensch T.K."/>
            <person name="Hirokawa N."/>
            <person name="Hill D."/>
            <person name="Huminiecki L."/>
            <person name="Iacono M."/>
            <person name="Ikeo K."/>
            <person name="Iwama A."/>
            <person name="Ishikawa T."/>
            <person name="Jakt M."/>
            <person name="Kanapin A."/>
            <person name="Katoh M."/>
            <person name="Kawasawa Y."/>
            <person name="Kelso J."/>
            <person name="Kitamura H."/>
            <person name="Kitano H."/>
            <person name="Kollias G."/>
            <person name="Krishnan S.P."/>
            <person name="Kruger A."/>
            <person name="Kummerfeld S.K."/>
            <person name="Kurochkin I.V."/>
            <person name="Lareau L.F."/>
            <person name="Lazarevic D."/>
            <person name="Lipovich L."/>
            <person name="Liu J."/>
            <person name="Liuni S."/>
            <person name="McWilliam S."/>
            <person name="Madan Babu M."/>
            <person name="Madera M."/>
            <person name="Marchionni L."/>
            <person name="Matsuda H."/>
            <person name="Matsuzawa S."/>
            <person name="Miki H."/>
            <person name="Mignone F."/>
            <person name="Miyake S."/>
            <person name="Morris K."/>
            <person name="Mottagui-Tabar S."/>
            <person name="Mulder N."/>
            <person name="Nakano N."/>
            <person name="Nakauchi H."/>
            <person name="Ng P."/>
            <person name="Nilsson R."/>
            <person name="Nishiguchi S."/>
            <person name="Nishikawa S."/>
            <person name="Nori F."/>
            <person name="Ohara O."/>
            <person name="Okazaki Y."/>
            <person name="Orlando V."/>
            <person name="Pang K.C."/>
            <person name="Pavan W.J."/>
            <person name="Pavesi G."/>
            <person name="Pesole G."/>
            <person name="Petrovsky N."/>
            <person name="Piazza S."/>
            <person name="Reed J."/>
            <person name="Reid J.F."/>
            <person name="Ring B.Z."/>
            <person name="Ringwald M."/>
            <person name="Rost B."/>
            <person name="Ruan Y."/>
            <person name="Salzberg S.L."/>
            <person name="Sandelin A."/>
            <person name="Schneider C."/>
            <person name="Schoenbach C."/>
            <person name="Sekiguchi K."/>
            <person name="Semple C.A."/>
            <person name="Seno S."/>
            <person name="Sessa L."/>
            <person name="Sheng Y."/>
            <person name="Shibata Y."/>
            <person name="Shimada H."/>
            <person name="Shimada K."/>
            <person name="Silva D."/>
            <person name="Sinclair B."/>
            <person name="Sperling S."/>
            <person name="Stupka E."/>
            <person name="Sugiura K."/>
            <person name="Sultana R."/>
            <person name="Takenaka Y."/>
            <person name="Taki K."/>
            <person name="Tammoja K."/>
            <person name="Tan S.L."/>
            <person name="Tang S."/>
            <person name="Taylor M.S."/>
            <person name="Tegner J."/>
            <person name="Teichmann S.A."/>
            <person name="Ueda H.R."/>
            <person name="van Nimwegen E."/>
            <person name="Verardo R."/>
            <person name="Wei C.L."/>
            <person name="Yagi K."/>
            <person name="Yamanishi H."/>
            <person name="Zabarovsky E."/>
            <person name="Zhu S."/>
            <person name="Zimmer A."/>
            <person name="Hide W."/>
            <person name="Bult C."/>
            <person name="Grimmond S.M."/>
            <person name="Teasdale R.D."/>
            <person name="Liu E.T."/>
            <person name="Brusic V."/>
            <person name="Quackenbush J."/>
            <person name="Wahlestedt C."/>
            <person name="Mattick J.S."/>
            <person name="Hume D.A."/>
            <person name="Kai C."/>
            <person name="Sasaki D."/>
            <person name="Tomaru Y."/>
            <person name="Fukuda S."/>
            <person name="Kanamori-Katayama M."/>
            <person name="Suzuki M."/>
            <person name="Aoki J."/>
            <person name="Arakawa T."/>
            <person name="Iida J."/>
            <person name="Imamura K."/>
            <person name="Itoh M."/>
            <person name="Kato T."/>
            <person name="Kawaji H."/>
            <person name="Kawagashira N."/>
            <person name="Kawashima T."/>
            <person name="Kojima M."/>
            <person name="Kondo S."/>
            <person name="Konno H."/>
            <person name="Nakano K."/>
            <person name="Ninomiya N."/>
            <person name="Nishio T."/>
            <person name="Okada M."/>
            <person name="Plessy C."/>
            <person name="Shibata K."/>
            <person name="Shiraki T."/>
            <person name="Suzuki S."/>
            <person name="Tagami M."/>
            <person name="Waki K."/>
            <person name="Watahiki A."/>
            <person name="Okamura-Oho Y."/>
            <person name="Suzuki H."/>
            <person name="Kawai J."/>
            <person name="Hayashizaki Y."/>
        </authorList>
    </citation>
    <scope>NUCLEOTIDE SEQUENCE [LARGE SCALE MRNA] (ISOFORM S)</scope>
    <source>
        <strain>C57BL/6J</strain>
        <tissue>Tongue</tissue>
    </source>
</reference>
<reference key="5">
    <citation type="journal article" date="2004" name="Genome Res.">
        <title>The status, quality, and expansion of the NIH full-length cDNA project: the Mammalian Gene Collection (MGC).</title>
        <authorList>
            <consortium name="The MGC Project Team"/>
        </authorList>
    </citation>
    <scope>NUCLEOTIDE SEQUENCE [LARGE SCALE MRNA] (ISOFORM S)</scope>
    <source>
        <tissue>Mammary tumor</tissue>
    </source>
</reference>
<reference key="6">
    <citation type="journal article" date="2006" name="Proc. Natl. Acad. Sci. U.S.A.">
        <title>Sirtuins deacetylate and activate mammalian acetyl-CoA synthetases.</title>
        <authorList>
            <person name="Hallows W.C."/>
            <person name="Lee S."/>
            <person name="Denu J.M."/>
        </authorList>
    </citation>
    <scope>FUNCTION</scope>
</reference>
<reference key="7">
    <citation type="journal article" date="2007" name="Mol. Cell. Biol.">
        <title>Mammalian Sir2 homolog SIRT3 regulates global mitochondrial lysine acetylation.</title>
        <authorList>
            <person name="Lombard D.B."/>
            <person name="Alt F.W."/>
            <person name="Cheng H.L."/>
            <person name="Bunkenborg J."/>
            <person name="Streeper R.S."/>
            <person name="Mostoslavsky R."/>
            <person name="Kim J."/>
            <person name="Yancopoulos G."/>
            <person name="Valenzuela D."/>
            <person name="Murphy A."/>
            <person name="Yang Y."/>
            <person name="Chen Y."/>
            <person name="Hirschey M.D."/>
            <person name="Bronson R.T."/>
            <person name="Haigis M."/>
            <person name="Guarente L.P."/>
            <person name="Farese R.V. Jr."/>
            <person name="Weissman S."/>
            <person name="Verdin E."/>
            <person name="Schwer B."/>
        </authorList>
    </citation>
    <scope>FUNCTION</scope>
    <scope>CATALYTIC ACTIVITY</scope>
</reference>
<reference key="8">
    <citation type="journal article" date="2008" name="Proc. Natl. Acad. Sci. U.S.A.">
        <title>A role for the mitochondrial deacetylase Sirt3 in regulating energy homeostasis.</title>
        <authorList>
            <person name="Ahn B.-H."/>
            <person name="Kim H.-S."/>
            <person name="Song S."/>
            <person name="Lee I.H."/>
            <person name="Liu J."/>
            <person name="Vassilopoulos A."/>
            <person name="Deng C.-X."/>
            <person name="Finkel T."/>
        </authorList>
    </citation>
    <scope>FUNCTION</scope>
    <scope>CATALYTIC ACTIVITY</scope>
    <scope>DISRUPTION PHENOTYPE</scope>
</reference>
<reference key="9">
    <citation type="journal article" date="2010" name="Cell">
        <title>A tissue-specific atlas of mouse protein phosphorylation and expression.</title>
        <authorList>
            <person name="Huttlin E.L."/>
            <person name="Jedrychowski M.P."/>
            <person name="Elias J.E."/>
            <person name="Goswami T."/>
            <person name="Rad R."/>
            <person name="Beausoleil S.A."/>
            <person name="Villen J."/>
            <person name="Haas W."/>
            <person name="Sowa M.E."/>
            <person name="Gygi S.P."/>
        </authorList>
    </citation>
    <scope>IDENTIFICATION BY MASS SPECTROMETRY [LARGE SCALE ANALYSIS]</scope>
    <source>
        <tissue>Brain</tissue>
        <tissue>Brown adipose tissue</tissue>
        <tissue>Heart</tissue>
        <tissue>Kidney</tissue>
        <tissue>Liver</tissue>
    </source>
</reference>
<reference key="10">
    <citation type="journal article" date="2010" name="Mol. Cell">
        <title>Sirt3-mediated deacetylation of evolutionarily conserved lysine 122 regulates MnSOD activity in response to stress.</title>
        <authorList>
            <person name="Tao R."/>
            <person name="Coleman M.C."/>
            <person name="Pennington J.D."/>
            <person name="Ozden O."/>
            <person name="Park S.H."/>
            <person name="Jiang H."/>
            <person name="Kim H.S."/>
            <person name="Flynn C.R."/>
            <person name="Hill S."/>
            <person name="Hayes McDonald W."/>
            <person name="Olivier A.K."/>
            <person name="Spitz D.R."/>
            <person name="Gius D."/>
        </authorList>
    </citation>
    <scope>FUNCTION</scope>
    <scope>CATALYTIC ACTIVITY</scope>
    <scope>DISRUPTION PHENOTYPE</scope>
</reference>
<reference key="11">
    <citation type="journal article" date="2011" name="PLoS ONE">
        <title>Succinate dehydrogenase is a direct target of sirtuin 3 deacetylase activity.</title>
        <authorList>
            <person name="Finley L.W."/>
            <person name="Haas W."/>
            <person name="Desquiret-Dumas V."/>
            <person name="Wallace D.C."/>
            <person name="Procaccio V."/>
            <person name="Gygi S.P."/>
            <person name="Haigis M.C."/>
        </authorList>
    </citation>
    <scope>FUNCTION</scope>
    <scope>CATALYTIC ACTIVITY</scope>
</reference>
<reference key="12">
    <citation type="journal article" date="2013" name="Cell. Mol. Life Sci.">
        <title>A novel AMPK-dependent FoxO3A-SIRT3 intramitochondrial complex sensing glucose levels.</title>
        <authorList>
            <person name="Peserico A."/>
            <person name="Chiacchiera F."/>
            <person name="Grossi V."/>
            <person name="Matrone A."/>
            <person name="Latorre D."/>
            <person name="Simonatto M."/>
            <person name="Fusella A."/>
            <person name="Ryall J.G."/>
            <person name="Finley L.W."/>
            <person name="Haigis M.C."/>
            <person name="Villani G."/>
            <person name="Puri P.L."/>
            <person name="Sartorelli V."/>
            <person name="Simone C."/>
        </authorList>
    </citation>
    <scope>FUNCTION</scope>
    <scope>IDENTIFICATION IN A COMPLEX WITH FOXO3 AND POLRMT</scope>
    <scope>SUBCELLULAR LOCATION</scope>
</reference>
<reference key="13">
    <citation type="journal article" date="2013" name="Diabetes">
        <title>Sirt3 regulates metabolic flexibility of skeletal muscle through reversible enzymatic deacetylation.</title>
        <authorList>
            <person name="Jing E."/>
            <person name="O'Neill B.T."/>
            <person name="Rardin M.J."/>
            <person name="Kleinridders A."/>
            <person name="Ilkeyeva O.R."/>
            <person name="Ussar S."/>
            <person name="Bain J.R."/>
            <person name="Lee K.Y."/>
            <person name="Verdin E.M."/>
            <person name="Newgard C.B."/>
            <person name="Gibson B.W."/>
            <person name="Kahn C.R."/>
        </authorList>
    </citation>
    <scope>FUNCTION</scope>
    <scope>CATALYTIC ACTIVITY</scope>
    <scope>TISSUE SPECIFICITY</scope>
    <scope>INDUCTION BY FASTING</scope>
</reference>
<reference key="14">
    <citation type="journal article" date="2013" name="Mitochondrion">
        <title>Mitochondrial SIRT4-type proteins in Caenorhabditis elegans and mammals interact with pyruvate carboxylase and other acetylated biotin-dependent carboxylases.</title>
        <authorList>
            <person name="Wirth M."/>
            <person name="Karaca S."/>
            <person name="Wenzel D."/>
            <person name="Ho L."/>
            <person name="Tishkoff D."/>
            <person name="Lombard D.B."/>
            <person name="Verdin E."/>
            <person name="Urlaub H."/>
            <person name="Jedrusik-Bode M."/>
            <person name="Fischle W."/>
        </authorList>
    </citation>
    <scope>INTERACTION WITH PCCA</scope>
</reference>
<reference key="15">
    <citation type="journal article" date="2013" name="Mol. Cell">
        <title>SIRT5-mediated lysine desuccinylation impacts diverse metabolic pathways.</title>
        <authorList>
            <person name="Park J."/>
            <person name="Chen Y."/>
            <person name="Tishkoff D.X."/>
            <person name="Peng C."/>
            <person name="Tan M."/>
            <person name="Dai L."/>
            <person name="Xie Z."/>
            <person name="Zhang Y."/>
            <person name="Zwaans B.M."/>
            <person name="Skinner M.E."/>
            <person name="Lombard D.B."/>
            <person name="Zhao Y."/>
        </authorList>
    </citation>
    <scope>SUCCINYLATION [LARGE SCALE ANALYSIS] AT LYS-57</scope>
    <scope>IDENTIFICATION BY MASS SPECTROMETRY [LARGE SCALE ANALYSIS]</scope>
    <source>
        <tissue>Liver</tissue>
    </source>
</reference>
<reference key="16">
    <citation type="journal article" date="2014" name="Antioxid. Redox Signal.">
        <title>SIRT3 deacetylates ATP synthase F1 complex proteins in response to nutrient and exercise-induced stress.</title>
        <authorList>
            <person name="Vassilopoulos A."/>
            <person name="Pennington D.J."/>
            <person name="Andresson T."/>
            <person name="Rees D."/>
            <person name="Fearnley I."/>
            <person name="Ham A."/>
            <person name="Yan Y."/>
            <person name="Flynn C.R."/>
            <person name="Jones K."/>
            <person name="Kim H.S."/>
            <person name="Deng C."/>
            <person name="Walker J."/>
            <person name="Gius D."/>
        </authorList>
    </citation>
    <scope>FUNCTION</scope>
    <scope>DISRUPTION PHENOTYPE</scope>
</reference>
<reference key="17">
    <citation type="journal article" date="2016" name="J. Biol. Chem.">
        <title>SIRT3 deacetylates ceramide synthases: Implications for mitochondrial dysfunction and brain injury.</title>
        <authorList>
            <person name="Novgorodov S.A."/>
            <person name="Riley C.L."/>
            <person name="Keffler J.A."/>
            <person name="Yu J."/>
            <person name="Kindy M.S."/>
            <person name="Macklin W.B."/>
            <person name="Lombard D.B."/>
            <person name="Gudz T.I."/>
        </authorList>
    </citation>
    <scope>FUNCTION</scope>
    <scope>CATALYTIC ACTIVITY</scope>
    <scope>DISRUPTION PHENOTYPE</scope>
</reference>
<reference key="18">
    <citation type="journal article" date="2022" name="Circulation">
        <title>Loss of Nuclear Envelope Integrity and Increased Oxidant Production Cause DNA Damage in Adult Hearts Deficient in PKP2: A Molecular Substrate of ARVC.</title>
        <authorList>
            <person name="Perez-Hernandez M."/>
            <person name="van Opbergen C.J.M."/>
            <person name="Bagwan N."/>
            <person name="Vissing C.R."/>
            <person name="Marron-Linares G.M."/>
            <person name="Zhang M."/>
            <person name="Torres Vega E."/>
            <person name="Sorrentino A."/>
            <person name="Drici L."/>
            <person name="Sulek K."/>
            <person name="Zhai R."/>
            <person name="Hansen F.B."/>
            <person name="Christensen A.H."/>
            <person name="Boesgaard S."/>
            <person name="Gustafsson F."/>
            <person name="Rossing K."/>
            <person name="Small E.M."/>
            <person name="Davies M.J."/>
            <person name="Rothenberg E."/>
            <person name="Sato P.Y."/>
            <person name="Cerrone M."/>
            <person name="Jensen T.H.L."/>
            <person name="Qvortrup K."/>
            <person name="Bundgaard H."/>
            <person name="Delmar M."/>
            <person name="Lundby A."/>
        </authorList>
    </citation>
    <scope>TISSUE SPECIFICITY</scope>
</reference>
<reference key="19">
    <citation type="journal article" date="2023" name="Hepatology">
        <title>Hepatic mitochondrial NAD + transporter SLC25A47 activates AMPKalpha mediating lipid metabolism and tumorigenesis.</title>
        <authorList>
            <person name="Cheng L."/>
            <person name="Deepak R.N.V.K."/>
            <person name="Wang G."/>
            <person name="Meng Z."/>
            <person name="Tao L."/>
            <person name="Xie M."/>
            <person name="Chi W."/>
            <person name="Zhang Y."/>
            <person name="Yang M."/>
            <person name="Liao Y."/>
            <person name="Chen R."/>
            <person name="Liang Y."/>
            <person name="Zhang J."/>
            <person name="Huang Y."/>
            <person name="Wang W."/>
            <person name="Guo Z."/>
            <person name="Wang Y."/>
            <person name="Lin J.D."/>
            <person name="Fan H."/>
            <person name="Chen L."/>
        </authorList>
    </citation>
    <scope>FUNCTION</scope>
</reference>
<protein>
    <recommendedName>
        <fullName>NAD-dependent protein deacetylase sirtuin-3</fullName>
        <ecNumber evidence="2 10 15 23 24 25 26">2.3.1.286</ecNumber>
    </recommendedName>
    <alternativeName>
        <fullName evidence="22">NAD-dependent protein delactylase sirtuin-3</fullName>
        <ecNumber evidence="1">2.3.1.-</ecNumber>
    </alternativeName>
    <alternativeName>
        <fullName>Regulatory protein SIR2 homolog 3</fullName>
    </alternativeName>
    <alternativeName>
        <fullName>SIR2-like protein 3</fullName>
        <shortName>mSIR2L3</shortName>
    </alternativeName>
</protein>
<keyword id="KW-0025">Alternative splicing</keyword>
<keyword id="KW-0963">Cytoplasm</keyword>
<keyword id="KW-0479">Metal-binding</keyword>
<keyword id="KW-0496">Mitochondrion</keyword>
<keyword id="KW-0520">NAD</keyword>
<keyword id="KW-1185">Reference proteome</keyword>
<keyword id="KW-0808">Transferase</keyword>
<keyword id="KW-0809">Transit peptide</keyword>
<keyword id="KW-0862">Zinc</keyword>
<sequence>MALDPLGAVVLQSIMALSGRLALAALRLWGPGGGRRPISLCVGASGGFGGGGSSEKKFSLQDVAELLRTRACSRVVVMVGAGISTPSGIPDFRSPGSGLYSNLQQYDIPYPEAIFELGFFFHNPKPFFMLAKELYPGHYRPNVTHYFLRLLHDKELLLRLYTQNIDGLERASGIPASKLVEAHGTFVTATCTVCRRSFPGEDIWADVMADRVPRCPVCTGVVKPDIVFFGEQLPARFLLHMADFALADLLLILGTSLEVEPFASLSEAVQKSVPRLLINRDLVGPFVLSPRRKDVVQLGDVVHGVERLVDLLGWTQELLDLMQRERGKLDGQDR</sequence>
<organism>
    <name type="scientific">Mus musculus</name>
    <name type="common">Mouse</name>
    <dbReference type="NCBI Taxonomy" id="10090"/>
    <lineage>
        <taxon>Eukaryota</taxon>
        <taxon>Metazoa</taxon>
        <taxon>Chordata</taxon>
        <taxon>Craniata</taxon>
        <taxon>Vertebrata</taxon>
        <taxon>Euteleostomi</taxon>
        <taxon>Mammalia</taxon>
        <taxon>Eutheria</taxon>
        <taxon>Euarchontoglires</taxon>
        <taxon>Glires</taxon>
        <taxon>Rodentia</taxon>
        <taxon>Myomorpha</taxon>
        <taxon>Muroidea</taxon>
        <taxon>Muridae</taxon>
        <taxon>Murinae</taxon>
        <taxon>Mus</taxon>
        <taxon>Mus</taxon>
    </lineage>
</organism>
<evidence type="ECO:0000250" key="1">
    <source>
        <dbReference type="UniProtKB" id="Q9NTG7"/>
    </source>
</evidence>
<evidence type="ECO:0000255" key="2">
    <source>
        <dbReference type="PROSITE-ProRule" id="PRU00236"/>
    </source>
</evidence>
<evidence type="ECO:0000269" key="3">
    <source>
    </source>
</evidence>
<evidence type="ECO:0000269" key="4">
    <source>
    </source>
</evidence>
<evidence type="ECO:0000269" key="5">
    <source>
    </source>
</evidence>
<evidence type="ECO:0000269" key="6">
    <source>
    </source>
</evidence>
<evidence type="ECO:0000269" key="7">
    <source>
    </source>
</evidence>
<evidence type="ECO:0000269" key="8">
    <source>
    </source>
</evidence>
<evidence type="ECO:0000269" key="9">
    <source>
    </source>
</evidence>
<evidence type="ECO:0000269" key="10">
    <source>
    </source>
</evidence>
<evidence type="ECO:0000269" key="11">
    <source>
    </source>
</evidence>
<evidence type="ECO:0000269" key="12">
    <source>
    </source>
</evidence>
<evidence type="ECO:0000269" key="13">
    <source>
    </source>
</evidence>
<evidence type="ECO:0000269" key="14">
    <source>
    </source>
</evidence>
<evidence type="ECO:0000269" key="15">
    <source>
    </source>
</evidence>
<evidence type="ECO:0000269" key="16">
    <source>
    </source>
</evidence>
<evidence type="ECO:0000269" key="17">
    <source>
    </source>
</evidence>
<evidence type="ECO:0000303" key="18">
    <source>
    </source>
</evidence>
<evidence type="ECO:0000303" key="19">
    <source>
    </source>
</evidence>
<evidence type="ECO:0000303" key="20">
    <source>
    </source>
</evidence>
<evidence type="ECO:0000303" key="21">
    <source>
    </source>
</evidence>
<evidence type="ECO:0000305" key="22"/>
<evidence type="ECO:0000305" key="23">
    <source>
    </source>
</evidence>
<evidence type="ECO:0000305" key="24">
    <source>
    </source>
</evidence>
<evidence type="ECO:0000305" key="25">
    <source>
    </source>
</evidence>
<evidence type="ECO:0000305" key="26">
    <source>
    </source>
</evidence>
<evidence type="ECO:0000312" key="27">
    <source>
        <dbReference type="MGI" id="MGI:1927665"/>
    </source>
</evidence>
<evidence type="ECO:0007744" key="28">
    <source>
    </source>
</evidence>
<feature type="transit peptide" description="Mitochondrion">
    <location>
        <begin position="1"/>
        <end status="unknown"/>
    </location>
</feature>
<feature type="chain" id="PRO_0000110263" description="NAD-dependent protein deacetylase sirtuin-3">
    <location>
        <begin status="unknown"/>
        <end position="334"/>
    </location>
</feature>
<feature type="domain" description="Deacetylase sirtuin-type" evidence="2">
    <location>
        <begin position="53"/>
        <end position="315"/>
    </location>
</feature>
<feature type="active site" description="Proton acceptor" evidence="2">
    <location>
        <position position="183"/>
    </location>
</feature>
<feature type="binding site" evidence="1">
    <location>
        <begin position="80"/>
        <end position="100"/>
    </location>
    <ligand>
        <name>NAD(+)</name>
        <dbReference type="ChEBI" id="CHEBI:57540"/>
    </ligand>
</feature>
<feature type="binding site" evidence="1">
    <location>
        <begin position="163"/>
        <end position="166"/>
    </location>
    <ligand>
        <name>NAD(+)</name>
        <dbReference type="ChEBI" id="CHEBI:57540"/>
    </ligand>
</feature>
<feature type="binding site" evidence="2">
    <location>
        <position position="191"/>
    </location>
    <ligand>
        <name>Zn(2+)</name>
        <dbReference type="ChEBI" id="CHEBI:29105"/>
    </ligand>
</feature>
<feature type="binding site" evidence="2">
    <location>
        <position position="194"/>
    </location>
    <ligand>
        <name>Zn(2+)</name>
        <dbReference type="ChEBI" id="CHEBI:29105"/>
    </ligand>
</feature>
<feature type="binding site" evidence="2">
    <location>
        <position position="215"/>
    </location>
    <ligand>
        <name>Zn(2+)</name>
        <dbReference type="ChEBI" id="CHEBI:29105"/>
    </ligand>
</feature>
<feature type="binding site" evidence="2">
    <location>
        <position position="218"/>
    </location>
    <ligand>
        <name>Zn(2+)</name>
        <dbReference type="ChEBI" id="CHEBI:29105"/>
    </ligand>
</feature>
<feature type="binding site" evidence="1">
    <location>
        <begin position="254"/>
        <end position="256"/>
    </location>
    <ligand>
        <name>NAD(+)</name>
        <dbReference type="ChEBI" id="CHEBI:57540"/>
    </ligand>
</feature>
<feature type="binding site" evidence="1">
    <location>
        <begin position="279"/>
        <end position="281"/>
    </location>
    <ligand>
        <name>NAD(+)</name>
        <dbReference type="ChEBI" id="CHEBI:57540"/>
    </ligand>
</feature>
<feature type="modified residue" description="N6-succinyllysine" evidence="28">
    <location>
        <position position="57"/>
    </location>
</feature>
<feature type="splice variant" id="VSP_053760" description="In isoform S." evidence="18 19 20">
    <location>
        <begin position="1"/>
        <end position="77"/>
    </location>
</feature>
<feature type="sequence conflict" description="In Ref. 1; AAG39258/AAG33227/AAG39257 and 3; ACJ70655." evidence="22" ref="1 3">
    <original>P</original>
    <variation>A</variation>
    <location>
        <position position="216"/>
    </location>
</feature>
<name>SIR3_MOUSE</name>
<accession>Q8R104</accession>
<accession>B9W0A9</accession>
<accession>C6ZII7</accession>
<accession>Q9EPA8</accession>
<comment type="function">
    <text evidence="1 4 5 6 9 10 11 13 14 15 17">NAD-dependent protein deacetylase (PubMed:17923681, PubMed:18794531, PubMed:21172655, PubMed:23835326, PubMed:26620563). Activates or deactivates mitochondrial target proteins by deacetylating key lysine residues (PubMed:17923681, PubMed:18794531, PubMed:21172655, PubMed:23835326). Known targets include ACSS1, IDH, GDH, PDHA1, SOD2, LCAD, SDHA, MRPL12 and the ATP synthase subunit ATP5PO (PubMed:16790548, PubMed:18794531, PubMed:21172655). Contributes to the regulation of the cellular energy metabolism (PubMed:23835326, PubMed:36804859). Important for regulating tissue-specific ATP levels (PubMed:18794531, PubMed:24252090). In response to metabolic stress, deacetylates transcription factor FOXO3 and recruits FOXO3 and mitochondrial RNA polymerase POLRMT to mtDNA to promote mtDNA transcription (PubMed:23283301). Acts as a regulator of ceramide metabolism by mediating deacetylation of ceramide synthases CERS1, CERS2 and CERS6, thereby increasing their activity and promoting mitochondrial ceramide accumulation (PubMed:26620563). Regulates hepatic lipogenesis (PubMed:36804859). Uses NAD(+) substrate imported by SLC25A47, triggering downstream activation of PRKAA1/AMPK-alpha signaling cascade that ultimately downregulates sterol regulatory element-binding protein (SREBP) transcriptional activities and ATP-consuming lipogenesis to restore cellular energy balance (PubMed:36804859). In addition to protein deacetylase activity, also acts as a protein-lysine deacylase by mediating delactylation of proteins, such as CCNE2 and 'Lys-16' of histone H4 (H4K16la) (By similarity).</text>
</comment>
<comment type="catalytic activity">
    <reaction evidence="2 10 15 23 24 25 26">
        <text>N(6)-acetyl-L-lysyl-[protein] + NAD(+) + H2O = 2''-O-acetyl-ADP-D-ribose + nicotinamide + L-lysyl-[protein]</text>
        <dbReference type="Rhea" id="RHEA:43636"/>
        <dbReference type="Rhea" id="RHEA-COMP:9752"/>
        <dbReference type="Rhea" id="RHEA-COMP:10731"/>
        <dbReference type="ChEBI" id="CHEBI:15377"/>
        <dbReference type="ChEBI" id="CHEBI:17154"/>
        <dbReference type="ChEBI" id="CHEBI:29969"/>
        <dbReference type="ChEBI" id="CHEBI:57540"/>
        <dbReference type="ChEBI" id="CHEBI:61930"/>
        <dbReference type="ChEBI" id="CHEBI:83767"/>
        <dbReference type="EC" id="2.3.1.286"/>
    </reaction>
</comment>
<comment type="catalytic activity">
    <reaction evidence="1">
        <text>N(6)-[(S)-lactoyl]-L-lysyl-[protein] + NAD(+) + H2O = 2''-O-(S)-lactoyl-ADP-D-ribose + nicotinamide + L-lysyl-[protein]</text>
        <dbReference type="Rhea" id="RHEA:80287"/>
        <dbReference type="Rhea" id="RHEA-COMP:9752"/>
        <dbReference type="Rhea" id="RHEA-COMP:19466"/>
        <dbReference type="ChEBI" id="CHEBI:15377"/>
        <dbReference type="ChEBI" id="CHEBI:17154"/>
        <dbReference type="ChEBI" id="CHEBI:29969"/>
        <dbReference type="ChEBI" id="CHEBI:57540"/>
        <dbReference type="ChEBI" id="CHEBI:231484"/>
        <dbReference type="ChEBI" id="CHEBI:231527"/>
    </reaction>
    <physiologicalReaction direction="left-to-right" evidence="1">
        <dbReference type="Rhea" id="RHEA:80288"/>
    </physiologicalReaction>
</comment>
<comment type="cofactor">
    <cofactor evidence="1">
        <name>Zn(2+)</name>
        <dbReference type="ChEBI" id="CHEBI:29105"/>
    </cofactor>
    <text evidence="1">Binds 1 zinc ion per subunit.</text>
</comment>
<comment type="subunit">
    <text evidence="1 11 12">Upon metabolic stress, forms a complex composed of FOXO3, SIRT3 and mitochondrial RNA polymerase POLRMT; the complex is recruited to mtDNA in a SIRT3-dependent manner (PubMed:23283301). Also forms a complex composed of FOXO3, SIRT3, TFAM and POLRMT (By similarity). Interacts with NDUFA9, ACSS1, IDH2 and GDH (By similarity). Interacts with PCCA (PubMed:23438705).</text>
</comment>
<comment type="interaction">
    <interactant intactId="EBI-6999888">
        <id>Q8R104</id>
    </interactant>
    <interactant intactId="EBI-2308120">
        <id>P47738</id>
        <label>Aldh2</label>
    </interactant>
    <organismsDiffer>false</organismsDiffer>
    <experiments>2</experiments>
</comment>
<comment type="subcellular location">
    <molecule>Isoform L</molecule>
    <subcellularLocation>
        <location evidence="7 8 11">Mitochondrion matrix</location>
    </subcellularLocation>
</comment>
<comment type="subcellular location">
    <molecule>Isoform S</molecule>
    <subcellularLocation>
        <location evidence="3">Cytoplasm</location>
    </subcellularLocation>
</comment>
<comment type="alternative products">
    <event type="alternative splicing"/>
    <isoform>
        <id>Q8R104-1</id>
        <name>L</name>
        <name>M1</name>
        <sequence type="displayed"/>
    </isoform>
    <isoform>
        <id>Q8R104-2</id>
        <name>S</name>
        <name>M3</name>
        <sequence type="described" ref="VSP_053760"/>
    </isoform>
</comment>
<comment type="tissue specificity">
    <text evidence="3 11 13 16">Expressed in cardiomyocytes (at protein level) (PubMed:11056054, PubMed:35959657). Expressed in the brain, liver, kidney and testes (PubMed:11056054). Expressed in skeletal muscles (at protein level) (PubMed:23283301, PubMed:23835326).</text>
</comment>
<comment type="induction">
    <text evidence="13">Sirt3 expression decreases by 50% in skeletal muscle upon fasting.</text>
</comment>
<comment type="disruption phenotype">
    <text evidence="6 9 14 15">Decreased muscle endurance under energetically demanding conditions (PubMed:24252090). Decreased Mn-SOD activity in liver, increased mitochondrial superoxide levels and genomic instability upon exposure to ionizing radiations (PubMed:21172655). In vivo ATP levels are reduced by 50 % in organs that normally express high levels of this protein (PubMed:18794531). ATP levels are unchanged in organs that normally express low levels of this protein (PubMed:18794531). Leads to increased mitochondrial protein acetylation (PubMed:18794531). Decreased ceramide accumulation in brain mitochondria (PubMed:26620563).</text>
</comment>
<comment type="miscellaneous">
    <text evidence="1">Has some ability to deacetylate histones in vitro, but seeing its subcellular location, this is unlikely in vivo.</text>
</comment>
<comment type="similarity">
    <text evidence="22">Belongs to the sirtuin family. Class I subfamily.</text>
</comment>
<gene>
    <name evidence="21 27" type="primary">Sirt3</name>
    <name type="synonym">Sir2l3</name>
</gene>
<proteinExistence type="evidence at protein level"/>